<reference key="1">
    <citation type="journal article" date="2003" name="Proc. Natl. Acad. Sci. U.S.A.">
        <title>The complete genome sequence of the Arabidopsis and tomato pathogen Pseudomonas syringae pv. tomato DC3000.</title>
        <authorList>
            <person name="Buell C.R."/>
            <person name="Joardar V."/>
            <person name="Lindeberg M."/>
            <person name="Selengut J."/>
            <person name="Paulsen I.T."/>
            <person name="Gwinn M.L."/>
            <person name="Dodson R.J."/>
            <person name="DeBoy R.T."/>
            <person name="Durkin A.S."/>
            <person name="Kolonay J.F."/>
            <person name="Madupu R."/>
            <person name="Daugherty S.C."/>
            <person name="Brinkac L.M."/>
            <person name="Beanan M.J."/>
            <person name="Haft D.H."/>
            <person name="Nelson W.C."/>
            <person name="Davidsen T.M."/>
            <person name="Zafar N."/>
            <person name="Zhou L."/>
            <person name="Liu J."/>
            <person name="Yuan Q."/>
            <person name="Khouri H.M."/>
            <person name="Fedorova N.B."/>
            <person name="Tran B."/>
            <person name="Russell D."/>
            <person name="Berry K.J."/>
            <person name="Utterback T.R."/>
            <person name="Van Aken S.E."/>
            <person name="Feldblyum T.V."/>
            <person name="D'Ascenzo M."/>
            <person name="Deng W.-L."/>
            <person name="Ramos A.R."/>
            <person name="Alfano J.R."/>
            <person name="Cartinhour S."/>
            <person name="Chatterjee A.K."/>
            <person name="Delaney T.P."/>
            <person name="Lazarowitz S.G."/>
            <person name="Martin G.B."/>
            <person name="Schneider D.J."/>
            <person name="Tang X."/>
            <person name="Bender C.L."/>
            <person name="White O."/>
            <person name="Fraser C.M."/>
            <person name="Collmer A."/>
        </authorList>
    </citation>
    <scope>NUCLEOTIDE SEQUENCE [LARGE SCALE GENOMIC DNA]</scope>
    <source>
        <strain>ATCC BAA-871 / DC3000</strain>
    </source>
</reference>
<evidence type="ECO:0000255" key="1">
    <source>
        <dbReference type="HAMAP-Rule" id="MF_00121"/>
    </source>
</evidence>
<protein>
    <recommendedName>
        <fullName evidence="1">Aspartyl/glutamyl-tRNA(Asn/Gln) amidotransferase subunit B</fullName>
        <shortName evidence="1">Asp/Glu-ADT subunit B</shortName>
        <ecNumber evidence="1">6.3.5.-</ecNumber>
    </recommendedName>
</protein>
<organism>
    <name type="scientific">Pseudomonas syringae pv. tomato (strain ATCC BAA-871 / DC3000)</name>
    <dbReference type="NCBI Taxonomy" id="223283"/>
    <lineage>
        <taxon>Bacteria</taxon>
        <taxon>Pseudomonadati</taxon>
        <taxon>Pseudomonadota</taxon>
        <taxon>Gammaproteobacteria</taxon>
        <taxon>Pseudomonadales</taxon>
        <taxon>Pseudomonadaceae</taxon>
        <taxon>Pseudomonas</taxon>
    </lineage>
</organism>
<feature type="chain" id="PRO_0000148825" description="Aspartyl/glutamyl-tRNA(Asn/Gln) amidotransferase subunit B">
    <location>
        <begin position="1"/>
        <end position="481"/>
    </location>
</feature>
<gene>
    <name evidence="1" type="primary">gatB</name>
    <name type="ordered locus">PSPTO_4475</name>
</gene>
<name>GATB_PSESM</name>
<accession>Q87WR8</accession>
<dbReference type="EC" id="6.3.5.-" evidence="1"/>
<dbReference type="EMBL" id="AE016853">
    <property type="protein sequence ID" value="AAO57924.1"/>
    <property type="molecule type" value="Genomic_DNA"/>
</dbReference>
<dbReference type="RefSeq" id="NP_794229.1">
    <property type="nucleotide sequence ID" value="NC_004578.1"/>
</dbReference>
<dbReference type="RefSeq" id="WP_011105016.1">
    <property type="nucleotide sequence ID" value="NC_004578.1"/>
</dbReference>
<dbReference type="SMR" id="Q87WR8"/>
<dbReference type="STRING" id="223283.PSPTO_4475"/>
<dbReference type="GeneID" id="1186156"/>
<dbReference type="KEGG" id="pst:PSPTO_4475"/>
<dbReference type="PATRIC" id="fig|223283.9.peg.4590"/>
<dbReference type="eggNOG" id="COG0064">
    <property type="taxonomic scope" value="Bacteria"/>
</dbReference>
<dbReference type="HOGENOM" id="CLU_019240_0_0_6"/>
<dbReference type="OrthoDB" id="9804078at2"/>
<dbReference type="PhylomeDB" id="Q87WR8"/>
<dbReference type="Proteomes" id="UP000002515">
    <property type="component" value="Chromosome"/>
</dbReference>
<dbReference type="GO" id="GO:0050566">
    <property type="term" value="F:asparaginyl-tRNA synthase (glutamine-hydrolyzing) activity"/>
    <property type="evidence" value="ECO:0007669"/>
    <property type="project" value="RHEA"/>
</dbReference>
<dbReference type="GO" id="GO:0005524">
    <property type="term" value="F:ATP binding"/>
    <property type="evidence" value="ECO:0007669"/>
    <property type="project" value="UniProtKB-KW"/>
</dbReference>
<dbReference type="GO" id="GO:0050567">
    <property type="term" value="F:glutaminyl-tRNA synthase (glutamine-hydrolyzing) activity"/>
    <property type="evidence" value="ECO:0007669"/>
    <property type="project" value="UniProtKB-UniRule"/>
</dbReference>
<dbReference type="GO" id="GO:0070681">
    <property type="term" value="P:glutaminyl-tRNAGln biosynthesis via transamidation"/>
    <property type="evidence" value="ECO:0007669"/>
    <property type="project" value="TreeGrafter"/>
</dbReference>
<dbReference type="GO" id="GO:0006412">
    <property type="term" value="P:translation"/>
    <property type="evidence" value="ECO:0007669"/>
    <property type="project" value="UniProtKB-UniRule"/>
</dbReference>
<dbReference type="FunFam" id="1.10.10.410:FF:000001">
    <property type="entry name" value="Aspartyl/glutamyl-tRNA(Asn/Gln) amidotransferase subunit B"/>
    <property type="match status" value="1"/>
</dbReference>
<dbReference type="FunFam" id="1.10.150.380:FF:000001">
    <property type="entry name" value="Aspartyl/glutamyl-tRNA(Asn/Gln) amidotransferase subunit B"/>
    <property type="match status" value="1"/>
</dbReference>
<dbReference type="Gene3D" id="1.10.10.410">
    <property type="match status" value="1"/>
</dbReference>
<dbReference type="Gene3D" id="1.10.150.380">
    <property type="entry name" value="GatB domain, N-terminal subdomain"/>
    <property type="match status" value="1"/>
</dbReference>
<dbReference type="HAMAP" id="MF_00121">
    <property type="entry name" value="GatB"/>
    <property type="match status" value="1"/>
</dbReference>
<dbReference type="InterPro" id="IPR017959">
    <property type="entry name" value="Asn/Gln-tRNA_amidoTrfase_suB/E"/>
</dbReference>
<dbReference type="InterPro" id="IPR006075">
    <property type="entry name" value="Asn/Gln-tRNA_Trfase_suB/E_cat"/>
</dbReference>
<dbReference type="InterPro" id="IPR018027">
    <property type="entry name" value="Asn/Gln_amidotransferase"/>
</dbReference>
<dbReference type="InterPro" id="IPR003789">
    <property type="entry name" value="Asn/Gln_tRNA_amidoTrase-B-like"/>
</dbReference>
<dbReference type="InterPro" id="IPR004413">
    <property type="entry name" value="GatB"/>
</dbReference>
<dbReference type="InterPro" id="IPR042114">
    <property type="entry name" value="GatB_C_1"/>
</dbReference>
<dbReference type="InterPro" id="IPR023168">
    <property type="entry name" value="GatB_Yqey_C_2"/>
</dbReference>
<dbReference type="InterPro" id="IPR017958">
    <property type="entry name" value="Gln-tRNA_amidoTrfase_suB_CS"/>
</dbReference>
<dbReference type="InterPro" id="IPR014746">
    <property type="entry name" value="Gln_synth/guanido_kin_cat_dom"/>
</dbReference>
<dbReference type="NCBIfam" id="TIGR00133">
    <property type="entry name" value="gatB"/>
    <property type="match status" value="1"/>
</dbReference>
<dbReference type="NCBIfam" id="NF004012">
    <property type="entry name" value="PRK05477.1-2"/>
    <property type="match status" value="1"/>
</dbReference>
<dbReference type="NCBIfam" id="NF004014">
    <property type="entry name" value="PRK05477.1-4"/>
    <property type="match status" value="1"/>
</dbReference>
<dbReference type="NCBIfam" id="NF004015">
    <property type="entry name" value="PRK05477.1-5"/>
    <property type="match status" value="1"/>
</dbReference>
<dbReference type="PANTHER" id="PTHR11659">
    <property type="entry name" value="GLUTAMYL-TRNA GLN AMIDOTRANSFERASE SUBUNIT B MITOCHONDRIAL AND PROKARYOTIC PET112-RELATED"/>
    <property type="match status" value="1"/>
</dbReference>
<dbReference type="PANTHER" id="PTHR11659:SF0">
    <property type="entry name" value="GLUTAMYL-TRNA(GLN) AMIDOTRANSFERASE SUBUNIT B, MITOCHONDRIAL"/>
    <property type="match status" value="1"/>
</dbReference>
<dbReference type="Pfam" id="PF02934">
    <property type="entry name" value="GatB_N"/>
    <property type="match status" value="1"/>
</dbReference>
<dbReference type="Pfam" id="PF02637">
    <property type="entry name" value="GatB_Yqey"/>
    <property type="match status" value="1"/>
</dbReference>
<dbReference type="SMART" id="SM00845">
    <property type="entry name" value="GatB_Yqey"/>
    <property type="match status" value="1"/>
</dbReference>
<dbReference type="SUPFAM" id="SSF89095">
    <property type="entry name" value="GatB/YqeY motif"/>
    <property type="match status" value="1"/>
</dbReference>
<dbReference type="SUPFAM" id="SSF55931">
    <property type="entry name" value="Glutamine synthetase/guanido kinase"/>
    <property type="match status" value="1"/>
</dbReference>
<dbReference type="PROSITE" id="PS01234">
    <property type="entry name" value="GATB"/>
    <property type="match status" value="1"/>
</dbReference>
<comment type="function">
    <text evidence="1">Allows the formation of correctly charged Asn-tRNA(Asn) or Gln-tRNA(Gln) through the transamidation of misacylated Asp-tRNA(Asn) or Glu-tRNA(Gln) in organisms which lack either or both of asparaginyl-tRNA or glutaminyl-tRNA synthetases. The reaction takes place in the presence of glutamine and ATP through an activated phospho-Asp-tRNA(Asn) or phospho-Glu-tRNA(Gln).</text>
</comment>
<comment type="catalytic activity">
    <reaction evidence="1">
        <text>L-glutamyl-tRNA(Gln) + L-glutamine + ATP + H2O = L-glutaminyl-tRNA(Gln) + L-glutamate + ADP + phosphate + H(+)</text>
        <dbReference type="Rhea" id="RHEA:17521"/>
        <dbReference type="Rhea" id="RHEA-COMP:9681"/>
        <dbReference type="Rhea" id="RHEA-COMP:9684"/>
        <dbReference type="ChEBI" id="CHEBI:15377"/>
        <dbReference type="ChEBI" id="CHEBI:15378"/>
        <dbReference type="ChEBI" id="CHEBI:29985"/>
        <dbReference type="ChEBI" id="CHEBI:30616"/>
        <dbReference type="ChEBI" id="CHEBI:43474"/>
        <dbReference type="ChEBI" id="CHEBI:58359"/>
        <dbReference type="ChEBI" id="CHEBI:78520"/>
        <dbReference type="ChEBI" id="CHEBI:78521"/>
        <dbReference type="ChEBI" id="CHEBI:456216"/>
    </reaction>
</comment>
<comment type="catalytic activity">
    <reaction evidence="1">
        <text>L-aspartyl-tRNA(Asn) + L-glutamine + ATP + H2O = L-asparaginyl-tRNA(Asn) + L-glutamate + ADP + phosphate + 2 H(+)</text>
        <dbReference type="Rhea" id="RHEA:14513"/>
        <dbReference type="Rhea" id="RHEA-COMP:9674"/>
        <dbReference type="Rhea" id="RHEA-COMP:9677"/>
        <dbReference type="ChEBI" id="CHEBI:15377"/>
        <dbReference type="ChEBI" id="CHEBI:15378"/>
        <dbReference type="ChEBI" id="CHEBI:29985"/>
        <dbReference type="ChEBI" id="CHEBI:30616"/>
        <dbReference type="ChEBI" id="CHEBI:43474"/>
        <dbReference type="ChEBI" id="CHEBI:58359"/>
        <dbReference type="ChEBI" id="CHEBI:78515"/>
        <dbReference type="ChEBI" id="CHEBI:78516"/>
        <dbReference type="ChEBI" id="CHEBI:456216"/>
    </reaction>
</comment>
<comment type="subunit">
    <text evidence="1">Heterotrimer of A, B and C subunits.</text>
</comment>
<comment type="similarity">
    <text evidence="1">Belongs to the GatB/GatE family. GatB subfamily.</text>
</comment>
<sequence>MQWEVVIGLEIHTQLSTQSKIFSGSATTFGSEPNTQACLVDLGMPGVLPVLNKEAVRMAVKFGLAVDAEIGQHNVFARKNYFYPDLPKGYQISQMELPIVGKGHLDIPLEDGTVKRVGITRAHLEEDAGKSLHEDFQGMTGIDLNRAGTPLLEIVSEPDMRSAKEAVAYVKAIHAIVRYLGICDGNMAEGSLRCDCNVSIRPKGQVEFGTRCEIKNVNSFRFIEKAINSEIQRQIDLIEDGGKVIQQTRLYDPNTNETRAMRSKEEANDYRYFPDPDLLPVIIEDSFIEETRATLPELPPQKRERFQSQFGLSTYDASVLASSREQADYFEKVVSISGDAKLAANWVMVELGSLLNKQGVEIDQSPVSAEQLGGMLKRITDNTISGKIAKMVFEAMANGEGSADEVIEKRGLKQVTDSGAIESMLDEVLAANAEQVEQYRAADEAKRGKMFGFFVGQAMKASKGKANPQQVNELLKAKLEG</sequence>
<keyword id="KW-0067">ATP-binding</keyword>
<keyword id="KW-0436">Ligase</keyword>
<keyword id="KW-0547">Nucleotide-binding</keyword>
<keyword id="KW-0648">Protein biosynthesis</keyword>
<keyword id="KW-1185">Reference proteome</keyword>
<proteinExistence type="inferred from homology"/>